<gene>
    <name evidence="4 9" type="primary">IGLV4-60</name>
</gene>
<name>LV460_HUMAN</name>
<sequence length="120" mass="12987">MAWTPLLLLFPLLLHCTGSLSQPVLTQSSSASASLGSSVKLTCTLSSGHSSYIIAWHQQQPGKAPRYLMKLEGSGSYNKGSGVPDRFSGSSSGADRYLTISNLQFEDEADYYCETWDSNT</sequence>
<protein>
    <recommendedName>
        <fullName evidence="4 9">Immunoglobulin lambda variable 4-60</fullName>
    </recommendedName>
</protein>
<evidence type="ECO:0000250" key="1">
    <source>
        <dbReference type="UniProtKB" id="P01721"/>
    </source>
</evidence>
<evidence type="ECO:0000255" key="2"/>
<evidence type="ECO:0000255" key="3">
    <source>
        <dbReference type="PROSITE-ProRule" id="PRU00114"/>
    </source>
</evidence>
<evidence type="ECO:0000303" key="4">
    <source>
    </source>
</evidence>
<evidence type="ECO:0000303" key="5">
    <source>
    </source>
</evidence>
<evidence type="ECO:0000303" key="6">
    <source>
    </source>
</evidence>
<evidence type="ECO:0000303" key="7">
    <source>
    </source>
</evidence>
<evidence type="ECO:0000303" key="8">
    <source>
    </source>
</evidence>
<evidence type="ECO:0000303" key="9">
    <source ref="3"/>
</evidence>
<evidence type="ECO:0000305" key="10"/>
<reference key="1">
    <citation type="journal article" date="1999" name="Nature">
        <title>The DNA sequence of human chromosome 22.</title>
        <authorList>
            <person name="Dunham I."/>
            <person name="Hunt A.R."/>
            <person name="Collins J.E."/>
            <person name="Bruskiewich R."/>
            <person name="Beare D.M."/>
            <person name="Clamp M."/>
            <person name="Smink L.J."/>
            <person name="Ainscough R."/>
            <person name="Almeida J.P."/>
            <person name="Babbage A.K."/>
            <person name="Bagguley C."/>
            <person name="Bailey J."/>
            <person name="Barlow K.F."/>
            <person name="Bates K.N."/>
            <person name="Beasley O.P."/>
            <person name="Bird C.P."/>
            <person name="Blakey S.E."/>
            <person name="Bridgeman A.M."/>
            <person name="Buck D."/>
            <person name="Burgess J."/>
            <person name="Burrill W.D."/>
            <person name="Burton J."/>
            <person name="Carder C."/>
            <person name="Carter N.P."/>
            <person name="Chen Y."/>
            <person name="Clark G."/>
            <person name="Clegg S.M."/>
            <person name="Cobley V.E."/>
            <person name="Cole C.G."/>
            <person name="Collier R.E."/>
            <person name="Connor R."/>
            <person name="Conroy D."/>
            <person name="Corby N.R."/>
            <person name="Coville G.J."/>
            <person name="Cox A.V."/>
            <person name="Davis J."/>
            <person name="Dawson E."/>
            <person name="Dhami P.D."/>
            <person name="Dockree C."/>
            <person name="Dodsworth S.J."/>
            <person name="Durbin R.M."/>
            <person name="Ellington A.G."/>
            <person name="Evans K.L."/>
            <person name="Fey J.M."/>
            <person name="Fleming K."/>
            <person name="French L."/>
            <person name="Garner A.A."/>
            <person name="Gilbert J.G.R."/>
            <person name="Goward M.E."/>
            <person name="Grafham D.V."/>
            <person name="Griffiths M.N.D."/>
            <person name="Hall C."/>
            <person name="Hall R.E."/>
            <person name="Hall-Tamlyn G."/>
            <person name="Heathcott R.W."/>
            <person name="Ho S."/>
            <person name="Holmes S."/>
            <person name="Hunt S.E."/>
            <person name="Jones M.C."/>
            <person name="Kershaw J."/>
            <person name="Kimberley A.M."/>
            <person name="King A."/>
            <person name="Laird G.K."/>
            <person name="Langford C.F."/>
            <person name="Leversha M.A."/>
            <person name="Lloyd C."/>
            <person name="Lloyd D.M."/>
            <person name="Martyn I.D."/>
            <person name="Mashreghi-Mohammadi M."/>
            <person name="Matthews L.H."/>
            <person name="Mccann O.T."/>
            <person name="Mcclay J."/>
            <person name="Mclaren S."/>
            <person name="McMurray A.A."/>
            <person name="Milne S.A."/>
            <person name="Mortimore B.J."/>
            <person name="Odell C.N."/>
            <person name="Pavitt R."/>
            <person name="Pearce A.V."/>
            <person name="Pearson D."/>
            <person name="Phillimore B.J.C.T."/>
            <person name="Phillips S.H."/>
            <person name="Plumb R.W."/>
            <person name="Ramsay H."/>
            <person name="Ramsey Y."/>
            <person name="Rogers L."/>
            <person name="Ross M.T."/>
            <person name="Scott C.E."/>
            <person name="Sehra H.K."/>
            <person name="Skuce C.D."/>
            <person name="Smalley S."/>
            <person name="Smith M.L."/>
            <person name="Soderlund C."/>
            <person name="Spragon L."/>
            <person name="Steward C.A."/>
            <person name="Sulston J.E."/>
            <person name="Swann R.M."/>
            <person name="Vaudin M."/>
            <person name="Wall M."/>
            <person name="Wallis J.M."/>
            <person name="Whiteley M.N."/>
            <person name="Willey D.L."/>
            <person name="Williams L."/>
            <person name="Williams S.A."/>
            <person name="Williamson H."/>
            <person name="Wilmer T.E."/>
            <person name="Wilming L."/>
            <person name="Wright C.L."/>
            <person name="Hubbard T."/>
            <person name="Bentley D.R."/>
            <person name="Beck S."/>
            <person name="Rogers J."/>
            <person name="Shimizu N."/>
            <person name="Minoshima S."/>
            <person name="Kawasaki K."/>
            <person name="Sasaki T."/>
            <person name="Asakawa S."/>
            <person name="Kudoh J."/>
            <person name="Shintani A."/>
            <person name="Shibuya K."/>
            <person name="Yoshizaki Y."/>
            <person name="Aoki N."/>
            <person name="Mitsuyama S."/>
            <person name="Roe B.A."/>
            <person name="Chen F."/>
            <person name="Chu L."/>
            <person name="Crabtree J."/>
            <person name="Deschamps S."/>
            <person name="Do A."/>
            <person name="Do T."/>
            <person name="Dorman A."/>
            <person name="Fang F."/>
            <person name="Fu Y."/>
            <person name="Hu P."/>
            <person name="Hua A."/>
            <person name="Kenton S."/>
            <person name="Lai H."/>
            <person name="Lao H.I."/>
            <person name="Lewis J."/>
            <person name="Lewis S."/>
            <person name="Lin S.-P."/>
            <person name="Loh P."/>
            <person name="Malaj E."/>
            <person name="Nguyen T."/>
            <person name="Pan H."/>
            <person name="Phan S."/>
            <person name="Qi S."/>
            <person name="Qian Y."/>
            <person name="Ray L."/>
            <person name="Ren Q."/>
            <person name="Shaull S."/>
            <person name="Sloan D."/>
            <person name="Song L."/>
            <person name="Wang Q."/>
            <person name="Wang Y."/>
            <person name="Wang Z."/>
            <person name="White J."/>
            <person name="Willingham D."/>
            <person name="Wu H."/>
            <person name="Yao Z."/>
            <person name="Zhan M."/>
            <person name="Zhang G."/>
            <person name="Chissoe S."/>
            <person name="Murray J."/>
            <person name="Miller N."/>
            <person name="Minx P."/>
            <person name="Fulton R."/>
            <person name="Johnson D."/>
            <person name="Bemis G."/>
            <person name="Bentley D."/>
            <person name="Bradshaw H."/>
            <person name="Bourne S."/>
            <person name="Cordes M."/>
            <person name="Du Z."/>
            <person name="Fulton L."/>
            <person name="Goela D."/>
            <person name="Graves T."/>
            <person name="Hawkins J."/>
            <person name="Hinds K."/>
            <person name="Kemp K."/>
            <person name="Latreille P."/>
            <person name="Layman D."/>
            <person name="Ozersky P."/>
            <person name="Rohlfing T."/>
            <person name="Scheet P."/>
            <person name="Walker C."/>
            <person name="Wamsley A."/>
            <person name="Wohldmann P."/>
            <person name="Pepin K."/>
            <person name="Nelson J."/>
            <person name="Korf I."/>
            <person name="Bedell J.A."/>
            <person name="Hillier L.W."/>
            <person name="Mardis E."/>
            <person name="Waterston R."/>
            <person name="Wilson R."/>
            <person name="Emanuel B.S."/>
            <person name="Shaikh T."/>
            <person name="Kurahashi H."/>
            <person name="Saitta S."/>
            <person name="Budarf M.L."/>
            <person name="McDermid H.E."/>
            <person name="Johnson A."/>
            <person name="Wong A.C.C."/>
            <person name="Morrow B.E."/>
            <person name="Edelmann L."/>
            <person name="Kim U.J."/>
            <person name="Shizuya H."/>
            <person name="Simon M.I."/>
            <person name="Dumanski J.P."/>
            <person name="Peyrard M."/>
            <person name="Kedra D."/>
            <person name="Seroussi E."/>
            <person name="Fransson I."/>
            <person name="Tapia I."/>
            <person name="Bruder C.E."/>
            <person name="O'Brien K.P."/>
            <person name="Wilkinson P."/>
            <person name="Bodenteich A."/>
            <person name="Hartman K."/>
            <person name="Hu X."/>
            <person name="Khan A.S."/>
            <person name="Lane L."/>
            <person name="Tilahun Y."/>
            <person name="Wright H."/>
        </authorList>
    </citation>
    <scope>NUCLEOTIDE SEQUENCE [LARGE SCALE GENOMIC DNA] (IMGT ALLELE IGLV4-60*02)</scope>
</reference>
<reference key="2">
    <citation type="journal article" date="2001" name="Exp. Clin. Immunogenet.">
        <title>Nomenclature of the human immunoglobulin lambda (IGL) genes.</title>
        <authorList>
            <person name="Lefranc M.P."/>
        </authorList>
    </citation>
    <scope>NOMENCLATURE</scope>
</reference>
<reference key="3">
    <citation type="book" date="2001" name="The Immunoglobulin FactsBook.">
        <title>The Immunoglobulin FactsBook.</title>
        <editorList>
            <person name="Lefranc M.P."/>
            <person name="Lefranc G."/>
        </editorList>
        <authorList>
            <person name="Lefranc M.P."/>
            <person name="Lefranc G."/>
        </authorList>
    </citation>
    <scope>NOMENCLATURE</scope>
</reference>
<reference key="4">
    <citation type="journal article" date="2007" name="Annu. Rev. Genet.">
        <title>Immunoglobulin somatic hypermutation.</title>
        <authorList>
            <person name="Teng G."/>
            <person name="Papavasiliou F.N."/>
        </authorList>
    </citation>
    <scope>REVIEW ON SOMATIC HYPERMUTATION</scope>
</reference>
<reference key="5">
    <citation type="journal article" date="2010" name="J. Allergy Clin. Immunol.">
        <title>Structure and function of immunoglobulins.</title>
        <authorList>
            <person name="Schroeder H.W. Jr."/>
            <person name="Cavacini L."/>
        </authorList>
    </citation>
    <scope>REVIEW ON IMMUNOGLOBULINS</scope>
</reference>
<reference key="6">
    <citation type="journal article" date="2012" name="Nat. Rev. Immunol.">
        <title>Molecular programming of B cell memory.</title>
        <authorList>
            <person name="McHeyzer-Williams M."/>
            <person name="Okitsu S."/>
            <person name="Wang N."/>
            <person name="McHeyzer-Williams L."/>
        </authorList>
    </citation>
    <scope>REVIEW ON FUNCTION</scope>
</reference>
<reference key="7">
    <citation type="journal article" date="2014" name="Front. Immunol.">
        <title>Immunoglobulin and T Cell Receptor Genes: IMGT((R)) and the Birth and Rise of Immunoinformatics.</title>
        <authorList>
            <person name="Lefranc M.P."/>
        </authorList>
    </citation>
    <scope>NOMENCLATURE</scope>
</reference>
<proteinExistence type="evidence at protein level"/>
<keyword id="KW-1064">Adaptive immunity</keyword>
<keyword id="KW-1003">Cell membrane</keyword>
<keyword id="KW-1015">Disulfide bond</keyword>
<keyword id="KW-0391">Immunity</keyword>
<keyword id="KW-1280">Immunoglobulin</keyword>
<keyword id="KW-0393">Immunoglobulin domain</keyword>
<keyword id="KW-0472">Membrane</keyword>
<keyword id="KW-1267">Proteomics identification</keyword>
<keyword id="KW-1185">Reference proteome</keyword>
<keyword id="KW-0964">Secreted</keyword>
<keyword id="KW-0732">Signal</keyword>
<organism>
    <name type="scientific">Homo sapiens</name>
    <name type="common">Human</name>
    <dbReference type="NCBI Taxonomy" id="9606"/>
    <lineage>
        <taxon>Eukaryota</taxon>
        <taxon>Metazoa</taxon>
        <taxon>Chordata</taxon>
        <taxon>Craniata</taxon>
        <taxon>Vertebrata</taxon>
        <taxon>Euteleostomi</taxon>
        <taxon>Mammalia</taxon>
        <taxon>Eutheria</taxon>
        <taxon>Euarchontoglires</taxon>
        <taxon>Primates</taxon>
        <taxon>Haplorrhini</taxon>
        <taxon>Catarrhini</taxon>
        <taxon>Hominidae</taxon>
        <taxon>Homo</taxon>
    </lineage>
</organism>
<dbReference type="EMBL" id="AC245517">
    <property type="status" value="NOT_ANNOTATED_CDS"/>
    <property type="molecule type" value="Genomic_DNA"/>
</dbReference>
<dbReference type="SMR" id="A0A075B6I1"/>
<dbReference type="FunCoup" id="A0A075B6I1">
    <property type="interactions" value="195"/>
</dbReference>
<dbReference type="IntAct" id="A0A075B6I1">
    <property type="interactions" value="1"/>
</dbReference>
<dbReference type="MINT" id="A0A075B6I1"/>
<dbReference type="IMGT_GENE-DB" id="IGLV4-60"/>
<dbReference type="BioMuta" id="IGLV4-60"/>
<dbReference type="MassIVE" id="A0A075B6I1"/>
<dbReference type="Ensembl" id="ENST00000390284.2">
    <property type="protein sequence ID" value="ENSP00000374819.2"/>
    <property type="gene ID" value="ENSG00000211639.2"/>
</dbReference>
<dbReference type="UCSC" id="uc062cbd.1">
    <property type="organism name" value="human"/>
</dbReference>
<dbReference type="AGR" id="HGNC:5920"/>
<dbReference type="GeneCards" id="IGLV4-60"/>
<dbReference type="HGNC" id="HGNC:5920">
    <property type="gene designation" value="IGLV4-60"/>
</dbReference>
<dbReference type="HPA" id="ENSG00000211639">
    <property type="expression patterns" value="Tissue enhanced (intestine, lymphoid tissue, urinary bladder)"/>
</dbReference>
<dbReference type="neXtProt" id="NX_A0A075B6I1"/>
<dbReference type="OpenTargets" id="ENSG00000211639"/>
<dbReference type="VEuPathDB" id="HostDB:ENSG00000211639"/>
<dbReference type="GeneTree" id="ENSGT00940000153934"/>
<dbReference type="HOGENOM" id="CLU_077975_4_0_1"/>
<dbReference type="InParanoid" id="A0A075B6I1"/>
<dbReference type="OMA" id="NTHTVIQ"/>
<dbReference type="OrthoDB" id="9536782at2759"/>
<dbReference type="PAN-GO" id="A0A075B6I1">
    <property type="GO annotations" value="3 GO annotations based on evolutionary models"/>
</dbReference>
<dbReference type="PhylomeDB" id="A0A075B6I1"/>
<dbReference type="SignaLink" id="A0A075B6I1"/>
<dbReference type="Pharos" id="A0A075B6I1">
    <property type="development level" value="Tdark"/>
</dbReference>
<dbReference type="PRO" id="PR:A0A075B6I1"/>
<dbReference type="Proteomes" id="UP000005640">
    <property type="component" value="Chromosome 22"/>
</dbReference>
<dbReference type="RNAct" id="A0A075B6I1">
    <property type="molecule type" value="protein"/>
</dbReference>
<dbReference type="Bgee" id="ENSG00000211639">
    <property type="expression patterns" value="Expressed in mucosa of transverse colon and 113 other cell types or tissues"/>
</dbReference>
<dbReference type="GO" id="GO:0005576">
    <property type="term" value="C:extracellular region"/>
    <property type="evidence" value="ECO:0007669"/>
    <property type="project" value="UniProtKB-SubCell"/>
</dbReference>
<dbReference type="GO" id="GO:0019814">
    <property type="term" value="C:immunoglobulin complex"/>
    <property type="evidence" value="ECO:0000318"/>
    <property type="project" value="GO_Central"/>
</dbReference>
<dbReference type="GO" id="GO:0005886">
    <property type="term" value="C:plasma membrane"/>
    <property type="evidence" value="ECO:0007669"/>
    <property type="project" value="UniProtKB-SubCell"/>
</dbReference>
<dbReference type="GO" id="GO:0002250">
    <property type="term" value="P:adaptive immune response"/>
    <property type="evidence" value="ECO:0007669"/>
    <property type="project" value="UniProtKB-KW"/>
</dbReference>
<dbReference type="GO" id="GO:0006955">
    <property type="term" value="P:immune response"/>
    <property type="evidence" value="ECO:0000318"/>
    <property type="project" value="GO_Central"/>
</dbReference>
<dbReference type="FunFam" id="2.60.40.10:FF:001671">
    <property type="entry name" value="Immunoglobulin lambda variable 4-69"/>
    <property type="match status" value="1"/>
</dbReference>
<dbReference type="Gene3D" id="2.60.40.10">
    <property type="entry name" value="Immunoglobulins"/>
    <property type="match status" value="1"/>
</dbReference>
<dbReference type="InterPro" id="IPR007110">
    <property type="entry name" value="Ig-like_dom"/>
</dbReference>
<dbReference type="InterPro" id="IPR036179">
    <property type="entry name" value="Ig-like_dom_sf"/>
</dbReference>
<dbReference type="InterPro" id="IPR013783">
    <property type="entry name" value="Ig-like_fold"/>
</dbReference>
<dbReference type="InterPro" id="IPR003599">
    <property type="entry name" value="Ig_sub"/>
</dbReference>
<dbReference type="InterPro" id="IPR013106">
    <property type="entry name" value="Ig_V-set"/>
</dbReference>
<dbReference type="InterPro" id="IPR050150">
    <property type="entry name" value="IgV_Light_Chain"/>
</dbReference>
<dbReference type="PANTHER" id="PTHR23267">
    <property type="entry name" value="IMMUNOGLOBULIN LIGHT CHAIN"/>
    <property type="match status" value="1"/>
</dbReference>
<dbReference type="Pfam" id="PF07686">
    <property type="entry name" value="V-set"/>
    <property type="match status" value="1"/>
</dbReference>
<dbReference type="SMART" id="SM00409">
    <property type="entry name" value="IG"/>
    <property type="match status" value="1"/>
</dbReference>
<dbReference type="SMART" id="SM00406">
    <property type="entry name" value="IGv"/>
    <property type="match status" value="1"/>
</dbReference>
<dbReference type="SUPFAM" id="SSF48726">
    <property type="entry name" value="Immunoglobulin"/>
    <property type="match status" value="1"/>
</dbReference>
<dbReference type="PROSITE" id="PS50835">
    <property type="entry name" value="IG_LIKE"/>
    <property type="match status" value="1"/>
</dbReference>
<comment type="function">
    <text evidence="5 6 7 8">V region of the variable domain of immunoglobulin light chains that participates in the antigen recognition (PubMed:24600447). Immunoglobulins, also known as antibodies, are membrane-bound or secreted glycoproteins produced by B lymphocytes. In the recognition phase of humoral immunity, the membrane-bound immunoglobulins serve as receptors which, upon binding of a specific antigen, trigger the clonal expansion and differentiation of B lymphocytes into immunoglobulins-secreting plasma cells. Secreted immunoglobulins mediate the effector phase of humoral immunity, which results in the elimination of bound antigens (PubMed:20176268, PubMed:22158414). The antigen binding site is formed by the variable domain of one heavy chain, together with that of its associated light chain. Thus, each immunoglobulin has two antigen binding sites with remarkable affinity for a particular antigen. The variable domains are assembled by a process called V-(D)-J rearrangement and can then be subjected to somatic hypermutations which, after exposure to antigen and selection, allow affinity maturation for a particular antigen (PubMed:17576170, PubMed:20176268).</text>
</comment>
<comment type="subunit">
    <text evidence="6">Immunoglobulins are composed of two identical heavy chains and two identical light chains; disulfide-linked.</text>
</comment>
<comment type="subcellular location">
    <subcellularLocation>
        <location evidence="6 7">Secreted</location>
    </subcellularLocation>
    <subcellularLocation>
        <location evidence="6 7">Cell membrane</location>
    </subcellularLocation>
</comment>
<comment type="polymorphism">
    <text>There are several alleles. The sequence shown is that of IMGT allele IGLV4-60*02.</text>
</comment>
<comment type="caution">
    <text evidence="10">For an example of a full-length immunoglobulin lambda light chain see AC P0DOX8.</text>
</comment>
<accession>A0A075B6I1</accession>
<feature type="signal peptide" evidence="2">
    <location>
        <begin position="1"/>
        <end position="21"/>
    </location>
</feature>
<feature type="chain" id="PRO_5001705246" description="Immunoglobulin lambda variable 4-60" evidence="2">
    <location>
        <begin position="22"/>
        <end position="120"/>
    </location>
</feature>
<feature type="domain" description="Ig-like" evidence="3">
    <location>
        <begin position="23"/>
        <end position="120" status="greater than"/>
    </location>
</feature>
<feature type="region of interest" description="Framework-1" evidence="1">
    <location>
        <begin position="22"/>
        <end position="46"/>
    </location>
</feature>
<feature type="region of interest" description="Complementarity-determining-1" evidence="1">
    <location>
        <begin position="47"/>
        <end position="53"/>
    </location>
</feature>
<feature type="region of interest" description="Framework-2" evidence="1">
    <location>
        <begin position="54"/>
        <end position="70"/>
    </location>
</feature>
<feature type="region of interest" description="Complementarity-determining-2" evidence="1">
    <location>
        <begin position="71"/>
        <end position="77"/>
    </location>
</feature>
<feature type="region of interest" description="Framework-3" evidence="1">
    <location>
        <begin position="78"/>
        <end position="113"/>
    </location>
</feature>
<feature type="region of interest" description="Complementarity-determining-3" evidence="1">
    <location>
        <begin position="114"/>
        <end position="120" status="greater than"/>
    </location>
</feature>
<feature type="disulfide bond" evidence="3">
    <location>
        <begin position="43"/>
        <end position="113"/>
    </location>
</feature>
<feature type="non-terminal residue">
    <location>
        <position position="120"/>
    </location>
</feature>